<feature type="chain" id="PRO_1000192535" description="Guanosine-5'-triphosphate,3'-diphosphate pyrophosphatase">
    <location>
        <begin position="1"/>
        <end position="493"/>
    </location>
</feature>
<proteinExistence type="inferred from homology"/>
<sequence length="493" mass="54844">MNSTSLYAAIDLGSNSFHMLVVREAAGSIQTLTRIKRKVRLAAGLNNDNHLSAEAMERGWQCLRLFAERLQDIPQPQIRVVATATLRLAVNAGEFIAKAQTILGCPVQVISGEEEARLIYQGVAHTTGGADQRLVVDIGGASTELVTGTGAQTTSLFSLSMGCVTWLERYFSDRNLAQENFDDAEKVARDVLRPVADELRFHGWKVCVGASGTVQALQEIMMAQGMDERITLAKLQQLKQRAIQCGRLEELEIEGLTLERALVFPSGLAILIAIFTELNIQSMTLAGGALREGLVYGMLHLAVDQDIRSRTLRNIQRRFIVDTDQANRVAKLADNFLKQVENAWHIEPISRELLLSACQLHEIGLSVDFKQAPYHAAYLVRHLDLPGYTPAQKKLLATLLLNQTNPVDLSSLHQQNAVPPRVAEQLCRLLRLAILFAGRRRDDLVPEITLQALNENLTLTLPGDWLAHHPLGKELIDQESQWQSYVHWPLDVR</sequence>
<organism>
    <name type="scientific">Salmonella gallinarum (strain 287/91 / NCTC 13346)</name>
    <dbReference type="NCBI Taxonomy" id="550538"/>
    <lineage>
        <taxon>Bacteria</taxon>
        <taxon>Pseudomonadati</taxon>
        <taxon>Pseudomonadota</taxon>
        <taxon>Gammaproteobacteria</taxon>
        <taxon>Enterobacterales</taxon>
        <taxon>Enterobacteriaceae</taxon>
        <taxon>Salmonella</taxon>
    </lineage>
</organism>
<reference key="1">
    <citation type="journal article" date="2008" name="Genome Res.">
        <title>Comparative genome analysis of Salmonella enteritidis PT4 and Salmonella gallinarum 287/91 provides insights into evolutionary and host adaptation pathways.</title>
        <authorList>
            <person name="Thomson N.R."/>
            <person name="Clayton D.J."/>
            <person name="Windhorst D."/>
            <person name="Vernikos G."/>
            <person name="Davidson S."/>
            <person name="Churcher C."/>
            <person name="Quail M.A."/>
            <person name="Stevens M."/>
            <person name="Jones M.A."/>
            <person name="Watson M."/>
            <person name="Barron A."/>
            <person name="Layton A."/>
            <person name="Pickard D."/>
            <person name="Kingsley R.A."/>
            <person name="Bignell A."/>
            <person name="Clark L."/>
            <person name="Harris B."/>
            <person name="Ormond D."/>
            <person name="Abdellah Z."/>
            <person name="Brooks K."/>
            <person name="Cherevach I."/>
            <person name="Chillingworth T."/>
            <person name="Woodward J."/>
            <person name="Norberczak H."/>
            <person name="Lord A."/>
            <person name="Arrowsmith C."/>
            <person name="Jagels K."/>
            <person name="Moule S."/>
            <person name="Mungall K."/>
            <person name="Saunders M."/>
            <person name="Whitehead S."/>
            <person name="Chabalgoity J.A."/>
            <person name="Maskell D."/>
            <person name="Humphreys T."/>
            <person name="Roberts M."/>
            <person name="Barrow P.A."/>
            <person name="Dougan G."/>
            <person name="Parkhill J."/>
        </authorList>
    </citation>
    <scope>NUCLEOTIDE SEQUENCE [LARGE SCALE GENOMIC DNA]</scope>
    <source>
        <strain>287/91 / NCTC 13346</strain>
    </source>
</reference>
<accession>B5RFS4</accession>
<keyword id="KW-0378">Hydrolase</keyword>
<name>GPPA_SALG2</name>
<comment type="function">
    <text evidence="1">Catalyzes the conversion of pppGpp to ppGpp. Guanosine pentaphosphate (pppGpp) is a cytoplasmic signaling molecule which together with ppGpp controls the 'stringent response', an adaptive process that allows bacteria to respond to amino acid starvation, resulting in the coordinated regulation of numerous cellular activities.</text>
</comment>
<comment type="catalytic activity">
    <reaction evidence="1">
        <text>guanosine 3'-diphosphate 5'-triphosphate + H2O = guanosine 3',5'-bis(diphosphate) + phosphate + H(+)</text>
        <dbReference type="Rhea" id="RHEA:13073"/>
        <dbReference type="ChEBI" id="CHEBI:15377"/>
        <dbReference type="ChEBI" id="CHEBI:15378"/>
        <dbReference type="ChEBI" id="CHEBI:43474"/>
        <dbReference type="ChEBI" id="CHEBI:77828"/>
        <dbReference type="ChEBI" id="CHEBI:142410"/>
        <dbReference type="EC" id="3.6.1.40"/>
    </reaction>
</comment>
<comment type="pathway">
    <text evidence="1">Purine metabolism; ppGpp biosynthesis; ppGpp from GTP: step 2/2.</text>
</comment>
<comment type="similarity">
    <text evidence="1">Belongs to the GppA/Ppx family. GppA subfamily.</text>
</comment>
<gene>
    <name evidence="1" type="primary">gppA</name>
    <name type="ordered locus">SG3529</name>
</gene>
<protein>
    <recommendedName>
        <fullName evidence="1">Guanosine-5'-triphosphate,3'-diphosphate pyrophosphatase</fullName>
        <ecNumber evidence="1">3.6.1.40</ecNumber>
    </recommendedName>
    <alternativeName>
        <fullName evidence="1">Guanosine pentaphosphate phosphohydrolase</fullName>
    </alternativeName>
    <alternativeName>
        <fullName evidence="1">pppGpp-5'-phosphohydrolase</fullName>
    </alternativeName>
</protein>
<evidence type="ECO:0000255" key="1">
    <source>
        <dbReference type="HAMAP-Rule" id="MF_01550"/>
    </source>
</evidence>
<dbReference type="EC" id="3.6.1.40" evidence="1"/>
<dbReference type="EMBL" id="AM933173">
    <property type="protein sequence ID" value="CAR39318.1"/>
    <property type="molecule type" value="Genomic_DNA"/>
</dbReference>
<dbReference type="RefSeq" id="WP_001089452.1">
    <property type="nucleotide sequence ID" value="NC_011274.1"/>
</dbReference>
<dbReference type="SMR" id="B5RFS4"/>
<dbReference type="KEGG" id="seg:SG3529"/>
<dbReference type="HOGENOM" id="CLU_025908_4_0_6"/>
<dbReference type="UniPathway" id="UPA00908">
    <property type="reaction ID" value="UER00885"/>
</dbReference>
<dbReference type="Proteomes" id="UP000008321">
    <property type="component" value="Chromosome"/>
</dbReference>
<dbReference type="GO" id="GO:0008894">
    <property type="term" value="F:guanosine-5'-triphosphate,3'-diphosphate diphosphatase activity"/>
    <property type="evidence" value="ECO:0007669"/>
    <property type="project" value="UniProtKB-UniRule"/>
</dbReference>
<dbReference type="GO" id="GO:0015974">
    <property type="term" value="P:guanosine pentaphosphate catabolic process"/>
    <property type="evidence" value="ECO:0007669"/>
    <property type="project" value="InterPro"/>
</dbReference>
<dbReference type="GO" id="GO:0015970">
    <property type="term" value="P:guanosine tetraphosphate biosynthetic process"/>
    <property type="evidence" value="ECO:0007669"/>
    <property type="project" value="UniProtKB-UniRule"/>
</dbReference>
<dbReference type="GO" id="GO:0015949">
    <property type="term" value="P:nucleobase-containing small molecule interconversion"/>
    <property type="evidence" value="ECO:0007669"/>
    <property type="project" value="TreeGrafter"/>
</dbReference>
<dbReference type="CDD" id="cd24117">
    <property type="entry name" value="ASKHA_NBD_EcGppA-like"/>
    <property type="match status" value="1"/>
</dbReference>
<dbReference type="FunFam" id="1.10.3210.10:FF:000004">
    <property type="entry name" value="Guanosine-5'-triphosphate,3'-diphosphate pyrophosphatase"/>
    <property type="match status" value="1"/>
</dbReference>
<dbReference type="FunFam" id="3.30.420.150:FF:000001">
    <property type="entry name" value="Guanosine-5'-triphosphate,3'-diphosphate pyrophosphatase"/>
    <property type="match status" value="1"/>
</dbReference>
<dbReference type="FunFam" id="3.30.420.40:FF:000023">
    <property type="entry name" value="Guanosine-5'-triphosphate,3'-diphosphate pyrophosphatase"/>
    <property type="match status" value="1"/>
</dbReference>
<dbReference type="Gene3D" id="3.30.420.40">
    <property type="match status" value="1"/>
</dbReference>
<dbReference type="Gene3D" id="3.30.420.150">
    <property type="entry name" value="Exopolyphosphatase. Domain 2"/>
    <property type="match status" value="1"/>
</dbReference>
<dbReference type="Gene3D" id="1.10.3210.10">
    <property type="entry name" value="Hypothetical protein af1432"/>
    <property type="match status" value="1"/>
</dbReference>
<dbReference type="HAMAP" id="MF_01550">
    <property type="entry name" value="GppA"/>
    <property type="match status" value="1"/>
</dbReference>
<dbReference type="InterPro" id="IPR043129">
    <property type="entry name" value="ATPase_NBD"/>
</dbReference>
<dbReference type="InterPro" id="IPR050273">
    <property type="entry name" value="GppA/Ppx_hydrolase"/>
</dbReference>
<dbReference type="InterPro" id="IPR023709">
    <property type="entry name" value="Guo-5TP_3DP_PyrP"/>
</dbReference>
<dbReference type="InterPro" id="IPR048950">
    <property type="entry name" value="Ppx_GppA_C"/>
</dbReference>
<dbReference type="InterPro" id="IPR003695">
    <property type="entry name" value="Ppx_GppA_N"/>
</dbReference>
<dbReference type="InterPro" id="IPR030673">
    <property type="entry name" value="PyroPPase_GppA_Ppx"/>
</dbReference>
<dbReference type="NCBIfam" id="NF008260">
    <property type="entry name" value="PRK11031.1"/>
    <property type="match status" value="1"/>
</dbReference>
<dbReference type="PANTHER" id="PTHR30005">
    <property type="entry name" value="EXOPOLYPHOSPHATASE"/>
    <property type="match status" value="1"/>
</dbReference>
<dbReference type="PANTHER" id="PTHR30005:SF0">
    <property type="entry name" value="RETROGRADE REGULATION PROTEIN 2"/>
    <property type="match status" value="1"/>
</dbReference>
<dbReference type="Pfam" id="PF02541">
    <property type="entry name" value="Ppx-GppA"/>
    <property type="match status" value="1"/>
</dbReference>
<dbReference type="Pfam" id="PF21447">
    <property type="entry name" value="Ppx-GppA_III"/>
    <property type="match status" value="1"/>
</dbReference>
<dbReference type="PIRSF" id="PIRSF001267">
    <property type="entry name" value="Pyrophosphatase_GppA_Ppx"/>
    <property type="match status" value="1"/>
</dbReference>
<dbReference type="SUPFAM" id="SSF53067">
    <property type="entry name" value="Actin-like ATPase domain"/>
    <property type="match status" value="2"/>
</dbReference>
<dbReference type="SUPFAM" id="SSF109604">
    <property type="entry name" value="HD-domain/PDEase-like"/>
    <property type="match status" value="1"/>
</dbReference>